<feature type="chain" id="PRO_0000052577" description="Hemoglobin subunit alpha">
    <location>
        <begin position="1"/>
        <end position="141"/>
    </location>
</feature>
<feature type="peptide" id="PRO_0000455844" description="Hemopressin" evidence="2">
    <location>
        <begin position="95"/>
        <end position="103"/>
    </location>
</feature>
<feature type="domain" description="Globin" evidence="4">
    <location>
        <begin position="1"/>
        <end position="141"/>
    </location>
</feature>
<feature type="binding site" evidence="4">
    <location>
        <position position="58"/>
    </location>
    <ligand>
        <name>O2</name>
        <dbReference type="ChEBI" id="CHEBI:15379"/>
    </ligand>
</feature>
<feature type="binding site" description="proximal binding residue" evidence="4">
    <location>
        <position position="87"/>
    </location>
    <ligand>
        <name>heme b</name>
        <dbReference type="ChEBI" id="CHEBI:60344"/>
    </ligand>
    <ligandPart>
        <name>Fe</name>
        <dbReference type="ChEBI" id="CHEBI:18248"/>
    </ligandPart>
</feature>
<feature type="modified residue" description="Phosphoserine" evidence="3">
    <location>
        <position position="3"/>
    </location>
</feature>
<feature type="modified residue" description="N6-succinyllysine" evidence="1">
    <location>
        <position position="7"/>
    </location>
</feature>
<feature type="modified residue" description="N6-succinyllysine" evidence="1">
    <location>
        <position position="11"/>
    </location>
</feature>
<feature type="modified residue" description="N6-acetyllysine; alternate" evidence="3">
    <location>
        <position position="16"/>
    </location>
</feature>
<feature type="modified residue" description="N6-succinyllysine; alternate" evidence="1">
    <location>
        <position position="16"/>
    </location>
</feature>
<feature type="modified residue" description="Phosphotyrosine" evidence="3">
    <location>
        <position position="24"/>
    </location>
</feature>
<feature type="modified residue" description="Phosphoserine" evidence="3">
    <location>
        <position position="35"/>
    </location>
</feature>
<feature type="modified residue" description="N6-succinyllysine" evidence="1">
    <location>
        <position position="40"/>
    </location>
</feature>
<feature type="modified residue" description="Phosphoserine" evidence="3">
    <location>
        <position position="49"/>
    </location>
</feature>
<feature type="modified residue" description="Phosphoserine" evidence="1">
    <location>
        <position position="102"/>
    </location>
</feature>
<feature type="modified residue" description="Phosphothreonine" evidence="1">
    <location>
        <position position="108"/>
    </location>
</feature>
<feature type="modified residue" description="Phosphoserine" evidence="1">
    <location>
        <position position="124"/>
    </location>
</feature>
<feature type="modified residue" description="Phosphoserine" evidence="1">
    <location>
        <position position="131"/>
    </location>
</feature>
<feature type="modified residue" description="Phosphothreonine" evidence="1">
    <location>
        <position position="134"/>
    </location>
</feature>
<feature type="modified residue" description="Phosphothreonine" evidence="1">
    <location>
        <position position="137"/>
    </location>
</feature>
<feature type="modified residue" description="Phosphoserine" evidence="1">
    <location>
        <position position="138"/>
    </location>
</feature>
<keyword id="KW-0007">Acetylation</keyword>
<keyword id="KW-0903">Direct protein sequencing</keyword>
<keyword id="KW-0349">Heme</keyword>
<keyword id="KW-0408">Iron</keyword>
<keyword id="KW-0479">Metal-binding</keyword>
<keyword id="KW-0561">Oxygen transport</keyword>
<keyword id="KW-0597">Phosphoprotein</keyword>
<keyword id="KW-0813">Transport</keyword>
<evidence type="ECO:0000250" key="1">
    <source>
        <dbReference type="UniProtKB" id="P01942"/>
    </source>
</evidence>
<evidence type="ECO:0000250" key="2">
    <source>
        <dbReference type="UniProtKB" id="P01946"/>
    </source>
</evidence>
<evidence type="ECO:0000250" key="3">
    <source>
        <dbReference type="UniProtKB" id="P69905"/>
    </source>
</evidence>
<evidence type="ECO:0000255" key="4">
    <source>
        <dbReference type="PROSITE-ProRule" id="PRU00238"/>
    </source>
</evidence>
<accession>P18972</accession>
<proteinExistence type="evidence at protein level"/>
<protein>
    <recommendedName>
        <fullName>Hemoglobin subunit alpha</fullName>
    </recommendedName>
    <alternativeName>
        <fullName>Alpha-globin</fullName>
    </alternativeName>
    <alternativeName>
        <fullName>Hemoglobin alpha chain</fullName>
    </alternativeName>
    <component>
        <recommendedName>
            <fullName evidence="2">Hemopressin</fullName>
        </recommendedName>
    </component>
</protein>
<comment type="function">
    <text>Involved in oxygen transport from the lung to the various peripheral tissues.</text>
</comment>
<comment type="function">
    <molecule>Hemopressin</molecule>
    <text evidence="2">Hemopressin acts as an antagonist peptide of the cannabinoid receptor CNR1. Hemopressin-binding efficiently blocks cannabinoid receptor CNR1 and subsequent signaling.</text>
</comment>
<comment type="subunit">
    <text>Heterotetramer of two alpha chains and two beta chains.</text>
</comment>
<comment type="tissue specificity">
    <text>Red blood cells.</text>
</comment>
<comment type="similarity">
    <text evidence="4">Belongs to the globin family.</text>
</comment>
<sequence length="141" mass="15138">VLSPADKSNVKAAWGKVGSHAGDYGAEALERMFLSFPTTKTYFPHFDLSHGSAQVKGHGKKVADALTNAVAHVDDMPNALSALSDLHAHKLRVDPVNFKLLSHCLLVTLAAHHPAEFTPAVHASLDKFLASVSTVLTSKYR</sequence>
<name>HBA_MICAD</name>
<dbReference type="PIR" id="S06512">
    <property type="entry name" value="HACJB"/>
</dbReference>
<dbReference type="BMRB" id="P18972"/>
<dbReference type="SMR" id="P18972"/>
<dbReference type="GO" id="GO:0072562">
    <property type="term" value="C:blood microparticle"/>
    <property type="evidence" value="ECO:0007669"/>
    <property type="project" value="TreeGrafter"/>
</dbReference>
<dbReference type="GO" id="GO:0031838">
    <property type="term" value="C:haptoglobin-hemoglobin complex"/>
    <property type="evidence" value="ECO:0007669"/>
    <property type="project" value="TreeGrafter"/>
</dbReference>
<dbReference type="GO" id="GO:0005833">
    <property type="term" value="C:hemoglobin complex"/>
    <property type="evidence" value="ECO:0007669"/>
    <property type="project" value="InterPro"/>
</dbReference>
<dbReference type="GO" id="GO:0031720">
    <property type="term" value="F:haptoglobin binding"/>
    <property type="evidence" value="ECO:0007669"/>
    <property type="project" value="TreeGrafter"/>
</dbReference>
<dbReference type="GO" id="GO:0020037">
    <property type="term" value="F:heme binding"/>
    <property type="evidence" value="ECO:0007669"/>
    <property type="project" value="InterPro"/>
</dbReference>
<dbReference type="GO" id="GO:0005506">
    <property type="term" value="F:iron ion binding"/>
    <property type="evidence" value="ECO:0007669"/>
    <property type="project" value="InterPro"/>
</dbReference>
<dbReference type="GO" id="GO:0043177">
    <property type="term" value="F:organic acid binding"/>
    <property type="evidence" value="ECO:0007669"/>
    <property type="project" value="TreeGrafter"/>
</dbReference>
<dbReference type="GO" id="GO:0019825">
    <property type="term" value="F:oxygen binding"/>
    <property type="evidence" value="ECO:0007669"/>
    <property type="project" value="InterPro"/>
</dbReference>
<dbReference type="GO" id="GO:0005344">
    <property type="term" value="F:oxygen carrier activity"/>
    <property type="evidence" value="ECO:0007669"/>
    <property type="project" value="UniProtKB-KW"/>
</dbReference>
<dbReference type="GO" id="GO:0004601">
    <property type="term" value="F:peroxidase activity"/>
    <property type="evidence" value="ECO:0007669"/>
    <property type="project" value="TreeGrafter"/>
</dbReference>
<dbReference type="GO" id="GO:0042744">
    <property type="term" value="P:hydrogen peroxide catabolic process"/>
    <property type="evidence" value="ECO:0007669"/>
    <property type="project" value="TreeGrafter"/>
</dbReference>
<dbReference type="CDD" id="cd08927">
    <property type="entry name" value="Hb-alpha-like"/>
    <property type="match status" value="1"/>
</dbReference>
<dbReference type="FunFam" id="1.10.490.10:FF:000002">
    <property type="entry name" value="Hemoglobin subunit alpha"/>
    <property type="match status" value="1"/>
</dbReference>
<dbReference type="Gene3D" id="1.10.490.10">
    <property type="entry name" value="Globins"/>
    <property type="match status" value="1"/>
</dbReference>
<dbReference type="InterPro" id="IPR000971">
    <property type="entry name" value="Globin"/>
</dbReference>
<dbReference type="InterPro" id="IPR009050">
    <property type="entry name" value="Globin-like_sf"/>
</dbReference>
<dbReference type="InterPro" id="IPR012292">
    <property type="entry name" value="Globin/Proto"/>
</dbReference>
<dbReference type="InterPro" id="IPR002338">
    <property type="entry name" value="Hemoglobin_a-typ"/>
</dbReference>
<dbReference type="InterPro" id="IPR050056">
    <property type="entry name" value="Hemoglobin_oxygen_transport"/>
</dbReference>
<dbReference type="InterPro" id="IPR002339">
    <property type="entry name" value="Hemoglobin_pi"/>
</dbReference>
<dbReference type="PANTHER" id="PTHR11442">
    <property type="entry name" value="HEMOGLOBIN FAMILY MEMBER"/>
    <property type="match status" value="1"/>
</dbReference>
<dbReference type="PANTHER" id="PTHR11442:SF48">
    <property type="entry name" value="HEMOGLOBIN SUBUNIT ALPHA"/>
    <property type="match status" value="1"/>
</dbReference>
<dbReference type="Pfam" id="PF00042">
    <property type="entry name" value="Globin"/>
    <property type="match status" value="1"/>
</dbReference>
<dbReference type="PRINTS" id="PR00612">
    <property type="entry name" value="ALPHAHAEM"/>
</dbReference>
<dbReference type="PRINTS" id="PR00815">
    <property type="entry name" value="PIHAEM"/>
</dbReference>
<dbReference type="SUPFAM" id="SSF46458">
    <property type="entry name" value="Globin-like"/>
    <property type="match status" value="1"/>
</dbReference>
<dbReference type="PROSITE" id="PS01033">
    <property type="entry name" value="GLOBIN"/>
    <property type="match status" value="1"/>
</dbReference>
<gene>
    <name type="primary">HBA</name>
</gene>
<organism>
    <name type="scientific">Mico argentatus</name>
    <name type="common">Silvery marmoset</name>
    <name type="synonym">Callithrix argentata</name>
    <dbReference type="NCBI Taxonomy" id="9482"/>
    <lineage>
        <taxon>Eukaryota</taxon>
        <taxon>Metazoa</taxon>
        <taxon>Chordata</taxon>
        <taxon>Craniata</taxon>
        <taxon>Vertebrata</taxon>
        <taxon>Euteleostomi</taxon>
        <taxon>Mammalia</taxon>
        <taxon>Eutheria</taxon>
        <taxon>Euarchontoglires</taxon>
        <taxon>Primates</taxon>
        <taxon>Haplorrhini</taxon>
        <taxon>Platyrrhini</taxon>
        <taxon>Cebidae</taxon>
        <taxon>Callitrichinae</taxon>
        <taxon>Mico</taxon>
    </lineage>
</organism>
<reference key="1">
    <citation type="journal article" date="1984" name="J. Biochem.">
        <title>Primary structures of adult hemoglobins of silvery marmoset, Callithrix argentatus, and cotton-headed tamarin, Saguinus oedipus.</title>
        <authorList>
            <person name="Maita T."/>
            <person name="Hayashida M."/>
            <person name="Matsuda G."/>
        </authorList>
    </citation>
    <scope>PROTEIN SEQUENCE</scope>
</reference>